<gene>
    <name evidence="12" type="primary">BLTP2</name>
    <name type="synonym">BCOX1</name>
    <name type="synonym">KIAA0100</name>
</gene>
<accession>Q14667</accession>
<accession>A6NCX3</accession>
<accession>Q3SYN5</accession>
<accession>Q49A07</accession>
<accession>Q5H9T4</accession>
<accession>Q6WG74</accession>
<accession>Q6ZP51</accession>
<accession>Q96HH8</accession>
<dbReference type="EMBL" id="AY943906">
    <property type="protein sequence ID" value="AAY19515.1"/>
    <property type="molecule type" value="mRNA"/>
</dbReference>
<dbReference type="EMBL" id="D43947">
    <property type="protein sequence ID" value="BAA07891.3"/>
    <property type="molecule type" value="mRNA"/>
</dbReference>
<dbReference type="EMBL" id="CR933634">
    <property type="protein sequence ID" value="CAI45940.1"/>
    <property type="molecule type" value="mRNA"/>
</dbReference>
<dbReference type="EMBL" id="AC005726">
    <property type="status" value="NOT_ANNOTATED_CDS"/>
    <property type="molecule type" value="Genomic_DNA"/>
</dbReference>
<dbReference type="EMBL" id="BC008591">
    <property type="protein sequence ID" value="AAH08591.2"/>
    <property type="molecule type" value="mRNA"/>
</dbReference>
<dbReference type="EMBL" id="BC048096">
    <property type="protein sequence ID" value="AAH48096.1"/>
    <property type="molecule type" value="mRNA"/>
</dbReference>
<dbReference type="EMBL" id="BC103726">
    <property type="protein sequence ID" value="AAI03727.1"/>
    <property type="molecule type" value="mRNA"/>
</dbReference>
<dbReference type="EMBL" id="AK130007">
    <property type="protein sequence ID" value="BAC85274.1"/>
    <property type="status" value="ALT_SEQ"/>
    <property type="molecule type" value="mRNA"/>
</dbReference>
<dbReference type="EMBL" id="AY288965">
    <property type="protein sequence ID" value="AAQ93061.1"/>
    <property type="status" value="ALT_SEQ"/>
    <property type="molecule type" value="mRNA"/>
</dbReference>
<dbReference type="CCDS" id="CCDS32595.1">
    <molecule id="Q14667-1"/>
</dbReference>
<dbReference type="RefSeq" id="NP_055495.2">
    <molecule id="Q14667-1"/>
    <property type="nucleotide sequence ID" value="NM_014680.3"/>
</dbReference>
<dbReference type="SMR" id="Q14667"/>
<dbReference type="BioGRID" id="115055">
    <property type="interactions" value="44"/>
</dbReference>
<dbReference type="FunCoup" id="Q14667">
    <property type="interactions" value="519"/>
</dbReference>
<dbReference type="IntAct" id="Q14667">
    <property type="interactions" value="25"/>
</dbReference>
<dbReference type="STRING" id="9606.ENSP00000436773"/>
<dbReference type="GlyCosmos" id="Q14667">
    <property type="glycosylation" value="1 site, No reported glycans"/>
</dbReference>
<dbReference type="GlyGen" id="Q14667">
    <property type="glycosylation" value="4 sites, 1 N-linked glycan (1 site), 1 O-linked glycan (2 sites)"/>
</dbReference>
<dbReference type="iPTMnet" id="Q14667"/>
<dbReference type="MetOSite" id="Q14667"/>
<dbReference type="PhosphoSitePlus" id="Q14667"/>
<dbReference type="SwissPalm" id="Q14667"/>
<dbReference type="BioMuta" id="KIAA0100"/>
<dbReference type="DMDM" id="114149325"/>
<dbReference type="jPOST" id="Q14667"/>
<dbReference type="MassIVE" id="Q14667"/>
<dbReference type="PaxDb" id="9606-ENSP00000436773"/>
<dbReference type="PeptideAtlas" id="Q14667"/>
<dbReference type="ProteomicsDB" id="60096">
    <molecule id="Q14667-1"/>
</dbReference>
<dbReference type="ProteomicsDB" id="60097">
    <molecule id="Q14667-2"/>
</dbReference>
<dbReference type="ProteomicsDB" id="60098">
    <molecule id="Q14667-3"/>
</dbReference>
<dbReference type="ProteomicsDB" id="60099">
    <molecule id="Q14667-4"/>
</dbReference>
<dbReference type="Pumba" id="Q14667"/>
<dbReference type="Antibodypedia" id="51190">
    <property type="antibodies" value="52 antibodies from 20 providers"/>
</dbReference>
<dbReference type="DNASU" id="9703"/>
<dbReference type="Ensembl" id="ENST00000528896.7">
    <molecule id="Q14667-1"/>
    <property type="protein sequence ID" value="ENSP00000436773.2"/>
    <property type="gene ID" value="ENSG00000007202.16"/>
</dbReference>
<dbReference type="GeneID" id="9703"/>
<dbReference type="KEGG" id="hsa:9703"/>
<dbReference type="MANE-Select" id="ENST00000528896.7">
    <property type="protein sequence ID" value="ENSP00000436773.2"/>
    <property type="RefSeq nucleotide sequence ID" value="NM_014680.5"/>
    <property type="RefSeq protein sequence ID" value="NP_055495.2"/>
</dbReference>
<dbReference type="UCSC" id="uc002hbu.4">
    <molecule id="Q14667-1"/>
    <property type="organism name" value="human"/>
</dbReference>
<dbReference type="AGR" id="HGNC:28960"/>
<dbReference type="CTD" id="9703"/>
<dbReference type="DisGeNET" id="9703"/>
<dbReference type="GeneCards" id="BLTP2"/>
<dbReference type="HGNC" id="HGNC:28960">
    <property type="gene designation" value="BLTP2"/>
</dbReference>
<dbReference type="HPA" id="ENSG00000007202">
    <property type="expression patterns" value="Low tissue specificity"/>
</dbReference>
<dbReference type="MalaCards" id="BLTP2"/>
<dbReference type="MIM" id="610664">
    <property type="type" value="gene"/>
</dbReference>
<dbReference type="neXtProt" id="NX_Q14667"/>
<dbReference type="OpenTargets" id="ENSG00000007202"/>
<dbReference type="PharmGKB" id="PA142671635"/>
<dbReference type="VEuPathDB" id="HostDB:ENSG00000007202"/>
<dbReference type="eggNOG" id="KOG1910">
    <property type="taxonomic scope" value="Eukaryota"/>
</dbReference>
<dbReference type="GeneTree" id="ENSGT00600000084481"/>
<dbReference type="InParanoid" id="Q14667"/>
<dbReference type="OMA" id="WASFETK"/>
<dbReference type="OrthoDB" id="1562405at2759"/>
<dbReference type="PAN-GO" id="Q14667">
    <property type="GO annotations" value="0 GO annotations based on evolutionary models"/>
</dbReference>
<dbReference type="PhylomeDB" id="Q14667"/>
<dbReference type="TreeFam" id="TF314307"/>
<dbReference type="PathwayCommons" id="Q14667"/>
<dbReference type="SignaLink" id="Q14667"/>
<dbReference type="BioGRID-ORCS" id="9703">
    <property type="hits" value="117 hits in 1166 CRISPR screens"/>
</dbReference>
<dbReference type="ChiTaRS" id="KIAA0100">
    <property type="organism name" value="human"/>
</dbReference>
<dbReference type="GenomeRNAi" id="9703"/>
<dbReference type="Pharos" id="Q14667">
    <property type="development level" value="Tbio"/>
</dbReference>
<dbReference type="PRO" id="PR:Q14667"/>
<dbReference type="Proteomes" id="UP000005640">
    <property type="component" value="Chromosome 17"/>
</dbReference>
<dbReference type="RNAct" id="Q14667">
    <property type="molecule type" value="protein"/>
</dbReference>
<dbReference type="Bgee" id="ENSG00000007202">
    <property type="expression patterns" value="Expressed in adrenal tissue and 194 other cell types or tissues"/>
</dbReference>
<dbReference type="ExpressionAtlas" id="Q14667">
    <property type="expression patterns" value="baseline and differential"/>
</dbReference>
<dbReference type="GO" id="GO:0005789">
    <property type="term" value="C:endoplasmic reticulum membrane"/>
    <property type="evidence" value="ECO:0007669"/>
    <property type="project" value="UniProtKB-SubCell"/>
</dbReference>
<dbReference type="GO" id="GO:0140268">
    <property type="term" value="C:endoplasmic reticulum-plasma membrane contact site"/>
    <property type="evidence" value="ECO:0000250"/>
    <property type="project" value="UniProtKB"/>
</dbReference>
<dbReference type="GO" id="GO:0031966">
    <property type="term" value="C:mitochondrial membrane"/>
    <property type="evidence" value="ECO:0007669"/>
    <property type="project" value="UniProtKB-SubCell"/>
</dbReference>
<dbReference type="GO" id="GO:0005886">
    <property type="term" value="C:plasma membrane"/>
    <property type="evidence" value="ECO:0007669"/>
    <property type="project" value="UniProtKB-SubCell"/>
</dbReference>
<dbReference type="GO" id="GO:0035091">
    <property type="term" value="F:phosphatidylinositol binding"/>
    <property type="evidence" value="ECO:0000250"/>
    <property type="project" value="UniProtKB"/>
</dbReference>
<dbReference type="InterPro" id="IPR019441">
    <property type="entry name" value="FMP27/BLTP2/Hobbit_GFWDK_RBG"/>
</dbReference>
<dbReference type="InterPro" id="IPR045167">
    <property type="entry name" value="Hobbit"/>
</dbReference>
<dbReference type="PANTHER" id="PTHR15678">
    <property type="entry name" value="ANTIGEN MLAA-22-RELATED"/>
    <property type="match status" value="1"/>
</dbReference>
<dbReference type="PANTHER" id="PTHR15678:SF6">
    <property type="entry name" value="BRIDGE-LIKE LIPID TRANSFER PROTEIN FAMILY MEMBER 2"/>
    <property type="match status" value="1"/>
</dbReference>
<dbReference type="Pfam" id="PF10344">
    <property type="entry name" value="Hobbit"/>
    <property type="match status" value="1"/>
</dbReference>
<dbReference type="SMART" id="SM01214">
    <property type="entry name" value="Fmp27_GFWDK"/>
    <property type="match status" value="1"/>
</dbReference>
<reference key="1">
    <citation type="journal article" date="2006" name="Biochim. Biophys. Acta">
        <title>Identification of BCOX1, a novel gene overexpressed in breast cancer.</title>
        <authorList>
            <person name="Song J."/>
            <person name="Yang W."/>
            <person name="Shih I.-M."/>
            <person name="Zhang Z."/>
            <person name="Bai J."/>
        </authorList>
    </citation>
    <scope>NUCLEOTIDE SEQUENCE [MRNA] (ISOFORM 4)</scope>
    <scope>TISSUE SPECIFICITY</scope>
    <source>
        <tissue>Mammary cancer</tissue>
    </source>
</reference>
<reference key="2">
    <citation type="journal article" date="1995" name="DNA Res.">
        <title>Prediction of the coding sequences of unidentified human genes. III. The coding sequences of 40 new genes (KIAA0081-KIAA0120) deduced by analysis of cDNA clones from human cell line KG-1.</title>
        <authorList>
            <person name="Nagase T."/>
            <person name="Miyajima N."/>
            <person name="Tanaka A."/>
            <person name="Sazuka T."/>
            <person name="Seki N."/>
            <person name="Sato S."/>
            <person name="Tabata S."/>
            <person name="Ishikawa K."/>
            <person name="Kawarabayasi Y."/>
            <person name="Kotani H."/>
            <person name="Nomura N."/>
        </authorList>
    </citation>
    <scope>NUCLEOTIDE SEQUENCE [LARGE SCALE MRNA] (ISOFORM 1)</scope>
    <source>
        <tissue>Bone marrow</tissue>
    </source>
</reference>
<reference key="3">
    <citation type="submission" date="2006-03" db="EMBL/GenBank/DDBJ databases">
        <authorList>
            <person name="Ohara O."/>
            <person name="Nagase T."/>
            <person name="Kikuno R."/>
            <person name="Nomura N."/>
        </authorList>
    </citation>
    <scope>SEQUENCE REVISION</scope>
</reference>
<reference key="4">
    <citation type="journal article" date="2007" name="BMC Genomics">
        <title>The full-ORF clone resource of the German cDNA consortium.</title>
        <authorList>
            <person name="Bechtel S."/>
            <person name="Rosenfelder H."/>
            <person name="Duda A."/>
            <person name="Schmidt C.P."/>
            <person name="Ernst U."/>
            <person name="Wellenreuther R."/>
            <person name="Mehrle A."/>
            <person name="Schuster C."/>
            <person name="Bahr A."/>
            <person name="Bloecker H."/>
            <person name="Heubner D."/>
            <person name="Hoerlein A."/>
            <person name="Michel G."/>
            <person name="Wedler H."/>
            <person name="Koehrer K."/>
            <person name="Ottenwaelder B."/>
            <person name="Poustka A."/>
            <person name="Wiemann S."/>
            <person name="Schupp I."/>
        </authorList>
    </citation>
    <scope>NUCLEOTIDE SEQUENCE [LARGE SCALE MRNA] (ISOFORM 2)</scope>
    <source>
        <tissue>Amygdala</tissue>
    </source>
</reference>
<reference key="5">
    <citation type="journal article" date="2006" name="Nature">
        <title>DNA sequence of human chromosome 17 and analysis of rearrangement in the human lineage.</title>
        <authorList>
            <person name="Zody M.C."/>
            <person name="Garber M."/>
            <person name="Adams D.J."/>
            <person name="Sharpe T."/>
            <person name="Harrow J."/>
            <person name="Lupski J.R."/>
            <person name="Nicholson C."/>
            <person name="Searle S.M."/>
            <person name="Wilming L."/>
            <person name="Young S.K."/>
            <person name="Abouelleil A."/>
            <person name="Allen N.R."/>
            <person name="Bi W."/>
            <person name="Bloom T."/>
            <person name="Borowsky M.L."/>
            <person name="Bugalter B.E."/>
            <person name="Butler J."/>
            <person name="Chang J.L."/>
            <person name="Chen C.-K."/>
            <person name="Cook A."/>
            <person name="Corum B."/>
            <person name="Cuomo C.A."/>
            <person name="de Jong P.J."/>
            <person name="DeCaprio D."/>
            <person name="Dewar K."/>
            <person name="FitzGerald M."/>
            <person name="Gilbert J."/>
            <person name="Gibson R."/>
            <person name="Gnerre S."/>
            <person name="Goldstein S."/>
            <person name="Grafham D.V."/>
            <person name="Grocock R."/>
            <person name="Hafez N."/>
            <person name="Hagopian D.S."/>
            <person name="Hart E."/>
            <person name="Norman C.H."/>
            <person name="Humphray S."/>
            <person name="Jaffe D.B."/>
            <person name="Jones M."/>
            <person name="Kamal M."/>
            <person name="Khodiyar V.K."/>
            <person name="LaButti K."/>
            <person name="Laird G."/>
            <person name="Lehoczky J."/>
            <person name="Liu X."/>
            <person name="Lokyitsang T."/>
            <person name="Loveland J."/>
            <person name="Lui A."/>
            <person name="Macdonald P."/>
            <person name="Major J.E."/>
            <person name="Matthews L."/>
            <person name="Mauceli E."/>
            <person name="McCarroll S.A."/>
            <person name="Mihalev A.H."/>
            <person name="Mudge J."/>
            <person name="Nguyen C."/>
            <person name="Nicol R."/>
            <person name="O'Leary S.B."/>
            <person name="Osoegawa K."/>
            <person name="Schwartz D.C."/>
            <person name="Shaw-Smith C."/>
            <person name="Stankiewicz P."/>
            <person name="Steward C."/>
            <person name="Swarbreck D."/>
            <person name="Venkataraman V."/>
            <person name="Whittaker C.A."/>
            <person name="Yang X."/>
            <person name="Zimmer A.R."/>
            <person name="Bradley A."/>
            <person name="Hubbard T."/>
            <person name="Birren B.W."/>
            <person name="Rogers J."/>
            <person name="Lander E.S."/>
            <person name="Nusbaum C."/>
        </authorList>
    </citation>
    <scope>NUCLEOTIDE SEQUENCE [LARGE SCALE GENOMIC DNA]</scope>
</reference>
<reference key="6">
    <citation type="journal article" date="2004" name="Genome Res.">
        <title>The status, quality, and expansion of the NIH full-length cDNA project: the Mammalian Gene Collection (MGC).</title>
        <authorList>
            <consortium name="The MGC Project Team"/>
        </authorList>
    </citation>
    <scope>NUCLEOTIDE SEQUENCE [LARGE SCALE MRNA] (ISOFORMS 3 AND 4)</scope>
    <scope>NUCLEOTIDE SEQUENCE [LARGE SCALE MRNA] OF 1866-2235 (ISOFORM 1)</scope>
    <source>
        <tissue>Brain</tissue>
        <tissue>Glioblastoma</tissue>
        <tissue>Testis</tissue>
    </source>
</reference>
<reference key="7">
    <citation type="journal article" date="2004" name="Nat. Genet.">
        <title>Complete sequencing and characterization of 21,243 full-length human cDNAs.</title>
        <authorList>
            <person name="Ota T."/>
            <person name="Suzuki Y."/>
            <person name="Nishikawa T."/>
            <person name="Otsuki T."/>
            <person name="Sugiyama T."/>
            <person name="Irie R."/>
            <person name="Wakamatsu A."/>
            <person name="Hayashi K."/>
            <person name="Sato H."/>
            <person name="Nagai K."/>
            <person name="Kimura K."/>
            <person name="Makita H."/>
            <person name="Sekine M."/>
            <person name="Obayashi M."/>
            <person name="Nishi T."/>
            <person name="Shibahara T."/>
            <person name="Tanaka T."/>
            <person name="Ishii S."/>
            <person name="Yamamoto J."/>
            <person name="Saito K."/>
            <person name="Kawai Y."/>
            <person name="Isono Y."/>
            <person name="Nakamura Y."/>
            <person name="Nagahari K."/>
            <person name="Murakami K."/>
            <person name="Yasuda T."/>
            <person name="Iwayanagi T."/>
            <person name="Wagatsuma M."/>
            <person name="Shiratori A."/>
            <person name="Sudo H."/>
            <person name="Hosoiri T."/>
            <person name="Kaku Y."/>
            <person name="Kodaira H."/>
            <person name="Kondo H."/>
            <person name="Sugawara M."/>
            <person name="Takahashi M."/>
            <person name="Kanda K."/>
            <person name="Yokoi T."/>
            <person name="Furuya T."/>
            <person name="Kikkawa E."/>
            <person name="Omura Y."/>
            <person name="Abe K."/>
            <person name="Kamihara K."/>
            <person name="Katsuta N."/>
            <person name="Sato K."/>
            <person name="Tanikawa M."/>
            <person name="Yamazaki M."/>
            <person name="Ninomiya K."/>
            <person name="Ishibashi T."/>
            <person name="Yamashita H."/>
            <person name="Murakawa K."/>
            <person name="Fujimori K."/>
            <person name="Tanai H."/>
            <person name="Kimata M."/>
            <person name="Watanabe M."/>
            <person name="Hiraoka S."/>
            <person name="Chiba Y."/>
            <person name="Ishida S."/>
            <person name="Ono Y."/>
            <person name="Takiguchi S."/>
            <person name="Watanabe S."/>
            <person name="Yosida M."/>
            <person name="Hotuta T."/>
            <person name="Kusano J."/>
            <person name="Kanehori K."/>
            <person name="Takahashi-Fujii A."/>
            <person name="Hara H."/>
            <person name="Tanase T.-O."/>
            <person name="Nomura Y."/>
            <person name="Togiya S."/>
            <person name="Komai F."/>
            <person name="Hara R."/>
            <person name="Takeuchi K."/>
            <person name="Arita M."/>
            <person name="Imose N."/>
            <person name="Musashino K."/>
            <person name="Yuuki H."/>
            <person name="Oshima A."/>
            <person name="Sasaki N."/>
            <person name="Aotsuka S."/>
            <person name="Yoshikawa Y."/>
            <person name="Matsunawa H."/>
            <person name="Ichihara T."/>
            <person name="Shiohata N."/>
            <person name="Sano S."/>
            <person name="Moriya S."/>
            <person name="Momiyama H."/>
            <person name="Satoh N."/>
            <person name="Takami S."/>
            <person name="Terashima Y."/>
            <person name="Suzuki O."/>
            <person name="Nakagawa S."/>
            <person name="Senoh A."/>
            <person name="Mizoguchi H."/>
            <person name="Goto Y."/>
            <person name="Shimizu F."/>
            <person name="Wakebe H."/>
            <person name="Hishigaki H."/>
            <person name="Watanabe T."/>
            <person name="Sugiyama A."/>
            <person name="Takemoto M."/>
            <person name="Kawakami B."/>
            <person name="Yamazaki M."/>
            <person name="Watanabe K."/>
            <person name="Kumagai A."/>
            <person name="Itakura S."/>
            <person name="Fukuzumi Y."/>
            <person name="Fujimori Y."/>
            <person name="Komiyama M."/>
            <person name="Tashiro H."/>
            <person name="Tanigami A."/>
            <person name="Fujiwara T."/>
            <person name="Ono T."/>
            <person name="Yamada K."/>
            <person name="Fujii Y."/>
            <person name="Ozaki K."/>
            <person name="Hirao M."/>
            <person name="Ohmori Y."/>
            <person name="Kawabata A."/>
            <person name="Hikiji T."/>
            <person name="Kobatake N."/>
            <person name="Inagaki H."/>
            <person name="Ikema Y."/>
            <person name="Okamoto S."/>
            <person name="Okitani R."/>
            <person name="Kawakami T."/>
            <person name="Noguchi S."/>
            <person name="Itoh T."/>
            <person name="Shigeta K."/>
            <person name="Senba T."/>
            <person name="Matsumura K."/>
            <person name="Nakajima Y."/>
            <person name="Mizuno T."/>
            <person name="Morinaga M."/>
            <person name="Sasaki M."/>
            <person name="Togashi T."/>
            <person name="Oyama M."/>
            <person name="Hata H."/>
            <person name="Watanabe M."/>
            <person name="Komatsu T."/>
            <person name="Mizushima-Sugano J."/>
            <person name="Satoh T."/>
            <person name="Shirai Y."/>
            <person name="Takahashi Y."/>
            <person name="Nakagawa K."/>
            <person name="Okumura K."/>
            <person name="Nagase T."/>
            <person name="Nomura N."/>
            <person name="Kikuchi H."/>
            <person name="Masuho Y."/>
            <person name="Yamashita R."/>
            <person name="Nakai K."/>
            <person name="Yada T."/>
            <person name="Nakamura Y."/>
            <person name="Ohara O."/>
            <person name="Isogai T."/>
            <person name="Sugano S."/>
        </authorList>
    </citation>
    <scope>NUCLEOTIDE SEQUENCE [LARGE SCALE MRNA] OF 1-528 (ISOFORM 1)</scope>
    <source>
        <tissue>Kidney</tissue>
    </source>
</reference>
<reference key="8">
    <citation type="journal article" date="2005" name="Leuk. Res.">
        <title>Serological identification of immunogenic antigens in acute monocytic leukemia.</title>
        <authorList>
            <person name="Chen G."/>
            <person name="Zhang W.G."/>
            <person name="Cao X.M."/>
            <person name="Li F.Y."/>
            <person name="Liu X.P."/>
            <person name="Yao L.B."/>
        </authorList>
    </citation>
    <scope>NUCLEOTIDE SEQUENCE [MRNA] OF 1557-2198 (ISOFORM 1)</scope>
    <source>
        <tissue>Monocytic leukemia</tissue>
    </source>
</reference>
<reference key="9">
    <citation type="journal article" date="2008" name="Proc. Natl. Acad. Sci. U.S.A.">
        <title>A quantitative atlas of mitotic phosphorylation.</title>
        <authorList>
            <person name="Dephoure N."/>
            <person name="Zhou C."/>
            <person name="Villen J."/>
            <person name="Beausoleil S.A."/>
            <person name="Bakalarski C.E."/>
            <person name="Elledge S.J."/>
            <person name="Gygi S.P."/>
        </authorList>
    </citation>
    <scope>PHOSPHORYLATION [LARGE SCALE ANALYSIS] AT SER-1846</scope>
    <scope>IDENTIFICATION BY MASS SPECTROMETRY [LARGE SCALE ANALYSIS]</scope>
    <source>
        <tissue>Cervix carcinoma</tissue>
    </source>
</reference>
<reference key="10">
    <citation type="journal article" date="2013" name="J. Proteome Res.">
        <title>Toward a comprehensive characterization of a human cancer cell phosphoproteome.</title>
        <authorList>
            <person name="Zhou H."/>
            <person name="Di Palma S."/>
            <person name="Preisinger C."/>
            <person name="Peng M."/>
            <person name="Polat A.N."/>
            <person name="Heck A.J."/>
            <person name="Mohammed S."/>
        </authorList>
    </citation>
    <scope>PHOSPHORYLATION [LARGE SCALE ANALYSIS] AT SER-1846; SER-2090 AND SER-2094</scope>
    <scope>IDENTIFICATION BY MASS SPECTROMETRY [LARGE SCALE ANALYSIS]</scope>
    <source>
        <tissue>Cervix carcinoma</tissue>
    </source>
</reference>
<reference key="11">
    <citation type="journal article" date="2022" name="Trends Cell Biol.">
        <title>A novel superfamily of bridge-like lipid transfer proteins.</title>
        <authorList>
            <person name="Neuman S.D."/>
            <person name="Levine T.P."/>
            <person name="Bashirullah A."/>
        </authorList>
    </citation>
    <scope>REVIEW OF FUNCTION</scope>
</reference>
<feature type="signal peptide" evidence="4">
    <location>
        <begin position="1"/>
        <end position="31"/>
    </location>
</feature>
<feature type="chain" id="PRO_0000248587" description="Bridge-like lipid transfer protein family member 2">
    <location>
        <begin position="32"/>
        <end position="2235"/>
    </location>
</feature>
<feature type="region of interest" description="Transmembrane domain" evidence="3">
    <location>
        <begin position="29"/>
        <end position="108"/>
    </location>
</feature>
<feature type="region of interest" description="Disordered" evidence="5">
    <location>
        <begin position="1495"/>
        <end position="1529"/>
    </location>
</feature>
<feature type="region of interest" description="Disordered" evidence="5">
    <location>
        <begin position="2074"/>
        <end position="2099"/>
    </location>
</feature>
<feature type="coiled-coil region" evidence="4">
    <location>
        <begin position="1813"/>
        <end position="1885"/>
    </location>
</feature>
<feature type="modified residue" description="Phosphoserine" evidence="2">
    <location>
        <position position="563"/>
    </location>
</feature>
<feature type="modified residue" description="Phosphoserine" evidence="13 14">
    <location>
        <position position="1846"/>
    </location>
</feature>
<feature type="modified residue" description="Phosphoserine" evidence="14">
    <location>
        <position position="2090"/>
    </location>
</feature>
<feature type="modified residue" description="Phosphoserine" evidence="14">
    <location>
        <position position="2094"/>
    </location>
</feature>
<feature type="glycosylation site" description="N-linked (GlcNAc...) asparagine" evidence="4">
    <location>
        <position position="730"/>
    </location>
</feature>
<feature type="splice variant" id="VSP_020317" description="In isoform 3." evidence="7">
    <location>
        <begin position="1"/>
        <end position="1846"/>
    </location>
</feature>
<feature type="splice variant" id="VSP_020318" description="In isoform 4." evidence="7 8">
    <location>
        <begin position="1"/>
        <end position="143"/>
    </location>
</feature>
<feature type="splice variant" id="VSP_020319" description="In isoform 4." evidence="7 8">
    <original>DGLLLSQSRQRIVCLNSLKASVQVTTI</original>
    <variation>GSWVGVLVLSENGRTRYSLCSCPIWSP</variation>
    <location>
        <begin position="339"/>
        <end position="365"/>
    </location>
</feature>
<feature type="splice variant" id="VSP_020320" description="In isoform 4." evidence="7 8">
    <location>
        <begin position="366"/>
        <end position="2235"/>
    </location>
</feature>
<feature type="splice variant" id="VSP_020321" description="In isoform 2." evidence="9">
    <location>
        <begin position="797"/>
        <end position="826"/>
    </location>
</feature>
<feature type="splice variant" id="VSP_020322" description="In isoform 3." evidence="7">
    <original>KN</original>
    <variation>MI</variation>
    <location>
        <begin position="1847"/>
        <end position="1848"/>
    </location>
</feature>
<feature type="sequence variant" id="VAR_027352" description="In dbSNP:rs16964472.">
    <original>H</original>
    <variation>Q</variation>
    <location>
        <position position="986"/>
    </location>
</feature>
<feature type="sequence variant" id="VAR_027353" description="In dbSNP:rs12602520.">
    <original>V</original>
    <variation>G</variation>
    <location>
        <position position="1516"/>
    </location>
</feature>
<feature type="sequence variant" id="VAR_052706" description="In dbSNP:rs16964462.">
    <original>R</original>
    <variation>G</variation>
    <location>
        <position position="2060"/>
    </location>
</feature>
<feature type="sequence conflict" description="In Ref. 4; CAI45940." evidence="11" ref="4">
    <original>L</original>
    <variation>P</variation>
    <location>
        <position position="77"/>
    </location>
</feature>
<feature type="sequence conflict" description="In Ref. 4; CAI45940." evidence="11" ref="4">
    <original>G</original>
    <variation>V</variation>
    <location>
        <position position="512"/>
    </location>
</feature>
<feature type="sequence conflict" description="In Ref. 4; CAI45940." evidence="11" ref="4">
    <original>T</original>
    <variation>A</variation>
    <location>
        <position position="601"/>
    </location>
</feature>
<feature type="sequence conflict" description="In Ref. 4; CAI45940." evidence="11" ref="4">
    <original>T</original>
    <variation>A</variation>
    <location>
        <position position="1264"/>
    </location>
</feature>
<feature type="sequence conflict" description="In Ref. 4; CAI45940." evidence="11" ref="4">
    <original>F</original>
    <variation>L</variation>
    <location>
        <position position="1546"/>
    </location>
</feature>
<feature type="sequence conflict" description="In Ref. 8; AAQ93061." evidence="11" ref="8">
    <original>N</original>
    <variation>H</variation>
    <location>
        <position position="1573"/>
    </location>
</feature>
<feature type="sequence conflict" description="In Ref. 8; AAQ93061." evidence="11" ref="8">
    <original>Q</original>
    <variation>E</variation>
    <location>
        <position position="1662"/>
    </location>
</feature>
<feature type="sequence conflict" description="In Ref. 8; AAQ93061." evidence="11" ref="8">
    <original>L</original>
    <variation>H</variation>
    <location>
        <position position="1734"/>
    </location>
</feature>
<feature type="sequence conflict" description="In Ref. 4; CAI45940." evidence="11" ref="4">
    <location>
        <position position="1764"/>
    </location>
</feature>
<feature type="sequence conflict" description="In Ref. 8; AAQ93061." evidence="11" ref="8">
    <original>Q</original>
    <variation>H</variation>
    <location>
        <position position="1830"/>
    </location>
</feature>
<feature type="sequence conflict" description="In Ref. 4; CAI45940." evidence="11" ref="4">
    <original>I</original>
    <variation>T</variation>
    <location>
        <position position="1838"/>
    </location>
</feature>
<feature type="sequence conflict" description="In Ref. 8; AAQ93061." evidence="11" ref="8">
    <original>V</original>
    <variation>I</variation>
    <location>
        <position position="1968"/>
    </location>
</feature>
<feature type="sequence conflict" description="In Ref. 8; AAQ93061." evidence="11" ref="8">
    <original>THQ</original>
    <variation>SHR</variation>
    <location>
        <begin position="2018"/>
        <end position="2020"/>
    </location>
</feature>
<feature type="sequence conflict" description="In Ref. 8; AAQ93061." evidence="11" ref="8">
    <original>S</original>
    <variation>N</variation>
    <location>
        <position position="2034"/>
    </location>
</feature>
<feature type="sequence conflict" description="In Ref. 8; AAQ93061." evidence="11" ref="8">
    <original>P</original>
    <variation>S</variation>
    <location>
        <position position="2073"/>
    </location>
</feature>
<feature type="sequence conflict" description="In Ref. 8; AAQ93061." evidence="11" ref="8">
    <original>S</original>
    <variation>L</variation>
    <location>
        <position position="2094"/>
    </location>
</feature>
<feature type="sequence conflict" description="In Ref. 8; AAQ93061." evidence="11" ref="8">
    <original>S</original>
    <variation>P</variation>
    <location>
        <position position="2185"/>
    </location>
</feature>
<organism>
    <name type="scientific">Homo sapiens</name>
    <name type="common">Human</name>
    <dbReference type="NCBI Taxonomy" id="9606"/>
    <lineage>
        <taxon>Eukaryota</taxon>
        <taxon>Metazoa</taxon>
        <taxon>Chordata</taxon>
        <taxon>Craniata</taxon>
        <taxon>Vertebrata</taxon>
        <taxon>Euteleostomi</taxon>
        <taxon>Mammalia</taxon>
        <taxon>Eutheria</taxon>
        <taxon>Euarchontoglires</taxon>
        <taxon>Primates</taxon>
        <taxon>Haplorrhini</taxon>
        <taxon>Catarrhini</taxon>
        <taxon>Hominidae</taxon>
        <taxon>Homo</taxon>
    </lineage>
</organism>
<proteinExistence type="evidence at protein level"/>
<protein>
    <recommendedName>
        <fullName evidence="11">Bridge-like lipid transfer protein family member 2</fullName>
    </recommendedName>
    <alternativeName>
        <fullName>Antigen MLAA-22</fullName>
    </alternativeName>
    <alternativeName>
        <fullName>Breast cancer-overexpressed gene 1 protein</fullName>
    </alternativeName>
    <alternativeName>
        <fullName evidence="10">Protein hobbit homolog</fullName>
    </alternativeName>
</protein>
<keyword id="KW-0025">Alternative splicing</keyword>
<keyword id="KW-1003">Cell membrane</keyword>
<keyword id="KW-0175">Coiled coil</keyword>
<keyword id="KW-0256">Endoplasmic reticulum</keyword>
<keyword id="KW-0325">Glycoprotein</keyword>
<keyword id="KW-0472">Membrane</keyword>
<keyword id="KW-0496">Mitochondrion</keyword>
<keyword id="KW-0597">Phosphoprotein</keyword>
<keyword id="KW-1267">Proteomics identification</keyword>
<keyword id="KW-1185">Reference proteome</keyword>
<keyword id="KW-0732">Signal</keyword>
<comment type="function">
    <text evidence="3">Tube-forming lipid transport protein which binds to phosphatidylinositols and affects phosphatidylinositol-4,5-bisphosphate (PtdIns-4,5-P2) distribution.</text>
</comment>
<comment type="subcellular location">
    <subcellularLocation>
        <location evidence="3">Cell membrane</location>
    </subcellularLocation>
    <subcellularLocation>
        <location evidence="3">Endoplasmic reticulum membrane</location>
    </subcellularLocation>
    <subcellularLocation>
        <location evidence="1">Mitochondrion membrane</location>
    </subcellularLocation>
    <text evidence="3">Localizes to endoplasmic reticulum-cell membrane and some endoplasmic reticulum-mitochondria contact sites.</text>
</comment>
<comment type="alternative products">
    <event type="alternative splicing"/>
    <isoform>
        <id>Q14667-1</id>
        <name>1</name>
        <sequence type="displayed"/>
    </isoform>
    <isoform>
        <id>Q14667-2</id>
        <name>2</name>
        <sequence type="described" ref="VSP_020321"/>
    </isoform>
    <isoform>
        <id>Q14667-3</id>
        <name>3</name>
        <sequence type="described" ref="VSP_020317 VSP_020322"/>
    </isoform>
    <isoform>
        <id>Q14667-4</id>
        <name>4</name>
        <sequence type="described" ref="VSP_020318 VSP_020319 VSP_020320"/>
    </isoform>
</comment>
<comment type="tissue specificity">
    <text evidence="6">Expressed in pancreas, placenta and up-regulated in breast carcinoma epithelial cells, ductal in situ carcinoma (DCIS), invasive breast carcinoma (IBC) and metastatic breast carcinoma cells (MET).</text>
</comment>
<comment type="similarity">
    <text evidence="11">Belongs to the SABRE family.</text>
</comment>
<comment type="sequence caution" evidence="11">
    <conflict type="frameshift">
        <sequence resource="EMBL-CDS" id="AAQ93061"/>
    </conflict>
</comment>
<comment type="sequence caution" evidence="11">
    <conflict type="miscellaneous discrepancy">
        <sequence resource="EMBL-CDS" id="AAQ93061"/>
    </conflict>
    <text>Sequencing errors.</text>
</comment>
<comment type="sequence caution" evidence="11">
    <conflict type="miscellaneous discrepancy">
        <sequence resource="EMBL-CDS" id="BAC85274"/>
    </conflict>
    <text>Contaminating sequence.</text>
</comment>
<evidence type="ECO:0000250" key="1">
    <source>
        <dbReference type="UniProtKB" id="Q06179"/>
    </source>
</evidence>
<evidence type="ECO:0000250" key="2">
    <source>
        <dbReference type="UniProtKB" id="Q5SYL3"/>
    </source>
</evidence>
<evidence type="ECO:0000250" key="3">
    <source>
        <dbReference type="UniProtKB" id="Q9VZS7"/>
    </source>
</evidence>
<evidence type="ECO:0000255" key="4"/>
<evidence type="ECO:0000256" key="5">
    <source>
        <dbReference type="SAM" id="MobiDB-lite"/>
    </source>
</evidence>
<evidence type="ECO:0000269" key="6">
    <source>
    </source>
</evidence>
<evidence type="ECO:0000303" key="7">
    <source>
    </source>
</evidence>
<evidence type="ECO:0000303" key="8">
    <source>
    </source>
</evidence>
<evidence type="ECO:0000303" key="9">
    <source>
    </source>
</evidence>
<evidence type="ECO:0000303" key="10">
    <source>
    </source>
</evidence>
<evidence type="ECO:0000305" key="11"/>
<evidence type="ECO:0000312" key="12">
    <source>
        <dbReference type="HGNC" id="HGNC:28960"/>
    </source>
</evidence>
<evidence type="ECO:0007744" key="13">
    <source>
    </source>
</evidence>
<evidence type="ECO:0007744" key="14">
    <source>
    </source>
</evidence>
<sequence length="2235" mass="253700">MPLFFSALLVLLLVALSALFLGRWLVVRLATKWCQRKLQAELKIGSFRFFWIQNVSLKFQQHQQTVEIDNLWISSKLLSHDLPHYVALCFGEVRIRTDLQKVSDLSAPFSQSAGVDQKELSFSPSLLKIFCQLFSIHVDAINIMVLKVDTSESLWHIQISRSRFLLDSDGKRLICEVSLCKINSKVLKSGQLEDTCLVELSLALDLCLKVGISSRHLTAITVDVWTLHAELHEGLFQSQLLCQGPSLASKPVPCSEVTENLVEPTLPGLFLLQQLPDQVKVKMENTSVVLSMNSQKRHLTWTLKLLQFLYHRDEDQLPLRSFTANSDMAQMSTELLLEDGLLLSQSRQRIVCLNSLKASVQVTTIDLSASLVLNTCIIHYRHQEFSHWLHLLALETQGSSSPVLKQRKKRTFPQILAPIIFSTSISNVNISIQLGDTPPFALGFNSISLDYQHLRPQSIHQRGVLTVDHLCWRVGSDSHIQRAPHPPNMHVWGEALVLDSFTLQGSYNQPLGLSSTQSDTLFLDCTIRGLQVEASDTCAQCLSRILSLMGPQSGKSAVSRHSSFGESVSLLWKVDLKVEDMNLFTLSALVGASEVRLDTLTILGSAETSTVGIQGLVLALVKSVTEKMQPCCKAPDIPTPVLSLSMLSITYHSSIRSLEVQCGAGLTLLWSPPDHMYLYQHVLATLQCRDLLRATVFPETVPSLALETSGTTSELEGRAPEPLPPKRLLNLTLEVSTAKLTAFVAEDKFITLAAESVSLSRHGGSLQAYCPELAAGFDGNSIFNFKEVEVQLLPELEEMILHRNPFPALQTLRNRVWLLSFGSVSVEFPYQYDFSRTLDEAVGVQKWLKGLHQGTRAWASPSPVPLPPDLLLKVEHFSWVFLDDVFEVKLHDNYELMKDESKESAKRLQLLDAKVAALRKQHGELLPARKIEELYASLERKNIEIYIQRSRRLYGNTPMRRALLTWSLAGLELVALADASFHGPEHVVEQVQELDPGSPFPPEGLDLVIQWCRMLKCNVKSFLVRIRDYPRYLFEIRDWRLMGRLVGTEQSGQPCSRRRQILHLGLPWGNVAVERNMPPLKFYHDFHSEIFQYTVVWGPCWDPAWTLIGQCVDLLTKPSADPSPPLPWWDKSRLLFHGDWHMDIEQANLHQLATEDPYNTTENMHWEWSHLSFHWKPGQFVFKGDLDINVRTASKYDDCCFLHLPDLCMTLDLQWLCHGNPHDHHSVTLRAPEFLPEVPLGQLHDSYRAFRSENLNLSIKMDLTRHSGTISQPRILLYSSTLRWMQNFWATWTSVTRPICRGKLFNNLKPSKKKLGQHYKQLSYTALFPQLQVHYWASFAQQRGIQIECSQGHVFTRGTQRLIPQAGTVMRRLISDWSVTQMVSDLSQVTVHLMASPTEENADHCLDPLVTKTHLLSLSSLTYQRHSNRTAEEELSARDGDPTFHTHQLHLVDLRISWTTTNRDIAFGLYDGYKKAAVLKRNLSTEALKGLKIDPQMPAKKPKRGVPTSASAPPRVNTPSFSGQPDKGSSGGAYMLQKLIEETDRFVVFTEEESGMSDQLCGIAACQTDDIYNRNCLIELVNCQMVLRGAETEGCVIVSAAKAQLLQCQHHPAWYGDTLKQKTSWTCLLDGMQYFATTESSPTEQDGRQLWLEVKNIEEHRQRSLDSVQELMESGQAVGGMVTTTTDWNQPAEAQQAQQVQRIISRCNCRMYYISYSHDIDPELATQIKPPEVLENQEKEDLLKKQEGAVDTFTLIHHELEISTNPAQYAMILDIVNNLLLHVEPKRKEHSEKKQRVRFQLEISSNPEEQRSSILHLQEAVRQHVAQIRQLEKQMYSIMKSLQDDSKNENLLDLNQKLQLQLNQEKANLQLESEELNILIRCFKDFQLQRANKMELRKQQEDVSVVRRTEFYFAQARWRLTEEDGQLGIAELELQRFLYSKVNKSDDTAEHLLELGWFTMNNLLPNAVYKVVLRPQSSCQSGRQLALRLFSKVRPPVGGISVKEHFEVNVVPLTIQLTHQFFHRMMGFFFPGRSVEDDEVGDEEDKSKLVTTGIPVVKPRQLIATDDAVPLGPGKGVAQGLTRSSGVRRSFRKSPEHPVDDIDKMKERAAMNNSFIYIKIPQVPLCVSYKGEKNSVDWGDLNLVLPCLEYHNNTWTWLDFAMAVKRDSRKALVAQVIKEKLRLKSATGSEVRGKLETKSDLNMQQQEEEEKARLLIGLSVGDKNPGKKSIFGRRK</sequence>
<name>BLTP2_HUMAN</name>